<dbReference type="EC" id="2.7.1.149" evidence="2"/>
<dbReference type="EMBL" id="U96135">
    <property type="protein sequence ID" value="AAB53645.1"/>
    <property type="molecule type" value="mRNA"/>
</dbReference>
<dbReference type="RefSeq" id="NP_001182710.1">
    <property type="nucleotide sequence ID" value="NM_001195781.1"/>
</dbReference>
<dbReference type="FunCoup" id="O13010">
    <property type="interactions" value="438"/>
</dbReference>
<dbReference type="STRING" id="9823.ENSSSCP00000011818"/>
<dbReference type="GlyGen" id="O13010">
    <property type="glycosylation" value="1 site"/>
</dbReference>
<dbReference type="PaxDb" id="9823-ENSSSCP00000011817"/>
<dbReference type="PeptideAtlas" id="O13010"/>
<dbReference type="GeneID" id="100520446"/>
<dbReference type="KEGG" id="ssc:100520446"/>
<dbReference type="CTD" id="5305"/>
<dbReference type="eggNOG" id="KOG0229">
    <property type="taxonomic scope" value="Eukaryota"/>
</dbReference>
<dbReference type="InParanoid" id="O13010"/>
<dbReference type="OrthoDB" id="20783at2759"/>
<dbReference type="Proteomes" id="UP000008227">
    <property type="component" value="Unplaced"/>
</dbReference>
<dbReference type="Proteomes" id="UP000314985">
    <property type="component" value="Unplaced"/>
</dbReference>
<dbReference type="Proteomes" id="UP000694570">
    <property type="component" value="Unplaced"/>
</dbReference>
<dbReference type="Proteomes" id="UP000694571">
    <property type="component" value="Unplaced"/>
</dbReference>
<dbReference type="Proteomes" id="UP000694720">
    <property type="component" value="Unplaced"/>
</dbReference>
<dbReference type="Proteomes" id="UP000694722">
    <property type="component" value="Unplaced"/>
</dbReference>
<dbReference type="Proteomes" id="UP000694723">
    <property type="component" value="Unplaced"/>
</dbReference>
<dbReference type="Proteomes" id="UP000694724">
    <property type="component" value="Unplaced"/>
</dbReference>
<dbReference type="Proteomes" id="UP000694725">
    <property type="component" value="Unplaced"/>
</dbReference>
<dbReference type="Proteomes" id="UP000694726">
    <property type="component" value="Unplaced"/>
</dbReference>
<dbReference type="Proteomes" id="UP000694727">
    <property type="component" value="Unplaced"/>
</dbReference>
<dbReference type="Proteomes" id="UP000694728">
    <property type="component" value="Unplaced"/>
</dbReference>
<dbReference type="GO" id="GO:0005829">
    <property type="term" value="C:cytosol"/>
    <property type="evidence" value="ECO:0007669"/>
    <property type="project" value="GOC"/>
</dbReference>
<dbReference type="GO" id="GO:0005764">
    <property type="term" value="C:lysosome"/>
    <property type="evidence" value="ECO:0000250"/>
    <property type="project" value="UniProtKB"/>
</dbReference>
<dbReference type="GO" id="GO:0005634">
    <property type="term" value="C:nucleus"/>
    <property type="evidence" value="ECO:0007669"/>
    <property type="project" value="UniProtKB-SubCell"/>
</dbReference>
<dbReference type="GO" id="GO:0001917">
    <property type="term" value="C:photoreceptor inner segment"/>
    <property type="evidence" value="ECO:0007669"/>
    <property type="project" value="UniProtKB-SubCell"/>
</dbReference>
<dbReference type="GO" id="GO:0001750">
    <property type="term" value="C:photoreceptor outer segment"/>
    <property type="evidence" value="ECO:0007669"/>
    <property type="project" value="UniProtKB-SubCell"/>
</dbReference>
<dbReference type="GO" id="GO:0005886">
    <property type="term" value="C:plasma membrane"/>
    <property type="evidence" value="ECO:0000318"/>
    <property type="project" value="GO_Central"/>
</dbReference>
<dbReference type="GO" id="GO:0016308">
    <property type="term" value="F:1-phosphatidylinositol-4-phosphate 5-kinase activity"/>
    <property type="evidence" value="ECO:0000250"/>
    <property type="project" value="UniProtKB"/>
</dbReference>
<dbReference type="GO" id="GO:0016309">
    <property type="term" value="F:1-phosphatidylinositol-5-phosphate 4-kinase activity"/>
    <property type="evidence" value="ECO:0000318"/>
    <property type="project" value="GO_Central"/>
</dbReference>
<dbReference type="GO" id="GO:0005524">
    <property type="term" value="F:ATP binding"/>
    <property type="evidence" value="ECO:0007669"/>
    <property type="project" value="UniProtKB-KW"/>
</dbReference>
<dbReference type="GO" id="GO:0042803">
    <property type="term" value="F:protein homodimerization activity"/>
    <property type="evidence" value="ECO:0000250"/>
    <property type="project" value="UniProtKB"/>
</dbReference>
<dbReference type="GO" id="GO:1902635">
    <property type="term" value="P:1-phosphatidyl-1D-myo-inositol 4,5-bisphosphate biosynthetic process"/>
    <property type="evidence" value="ECO:0000250"/>
    <property type="project" value="UniProtKB"/>
</dbReference>
<dbReference type="GO" id="GO:0061909">
    <property type="term" value="P:autophagosome-lysosome fusion"/>
    <property type="evidence" value="ECO:0000250"/>
    <property type="project" value="UniProtKB"/>
</dbReference>
<dbReference type="GO" id="GO:0046627">
    <property type="term" value="P:negative regulation of insulin receptor signaling pathway"/>
    <property type="evidence" value="ECO:0000250"/>
    <property type="project" value="UniProtKB"/>
</dbReference>
<dbReference type="GO" id="GO:0046854">
    <property type="term" value="P:phosphatidylinositol phosphate biosynthetic process"/>
    <property type="evidence" value="ECO:0000318"/>
    <property type="project" value="GO_Central"/>
</dbReference>
<dbReference type="GO" id="GO:0010506">
    <property type="term" value="P:regulation of autophagy"/>
    <property type="evidence" value="ECO:0000250"/>
    <property type="project" value="UniProtKB"/>
</dbReference>
<dbReference type="GO" id="GO:0090119">
    <property type="term" value="P:vesicle-mediated cholesterol transport"/>
    <property type="evidence" value="ECO:0000250"/>
    <property type="project" value="UniProtKB"/>
</dbReference>
<dbReference type="CDD" id="cd17309">
    <property type="entry name" value="PIPKc_PIP5K2A"/>
    <property type="match status" value="1"/>
</dbReference>
<dbReference type="FunFam" id="3.30.800.10:FF:000002">
    <property type="entry name" value="Phosphatidylinositol 5-phosphate 4-kinase type-2 beta"/>
    <property type="match status" value="1"/>
</dbReference>
<dbReference type="FunFam" id="3.30.810.10:FF:000003">
    <property type="entry name" value="Phosphatidylinositol 5-phosphate 4-kinase type-2 beta"/>
    <property type="match status" value="1"/>
</dbReference>
<dbReference type="FunFam" id="3.30.810.10:FF:000004">
    <property type="entry name" value="Phosphatidylinositol 5-phosphate 4-kinase type-2 beta"/>
    <property type="match status" value="1"/>
</dbReference>
<dbReference type="Gene3D" id="3.30.810.10">
    <property type="entry name" value="2-Layer Sandwich"/>
    <property type="match status" value="2"/>
</dbReference>
<dbReference type="Gene3D" id="3.30.800.10">
    <property type="entry name" value="Phosphatidylinositol Phosphate Kinase II Beta"/>
    <property type="match status" value="1"/>
</dbReference>
<dbReference type="InterPro" id="IPR027483">
    <property type="entry name" value="PInositol-4-P-4/5-kinase_C_sf"/>
</dbReference>
<dbReference type="InterPro" id="IPR002498">
    <property type="entry name" value="PInositol-4-P-4/5-kinase_core"/>
</dbReference>
<dbReference type="InterPro" id="IPR027484">
    <property type="entry name" value="PInositol-4-P-5-kinase_N"/>
</dbReference>
<dbReference type="InterPro" id="IPR023610">
    <property type="entry name" value="PInositol-4/5-P-5/4-kinase"/>
</dbReference>
<dbReference type="PANTHER" id="PTHR23086:SF21">
    <property type="entry name" value="PHOSPHATIDYLINOSITOL 5-PHOSPHATE 4-KINASE TYPE-2 ALPHA"/>
    <property type="match status" value="1"/>
</dbReference>
<dbReference type="PANTHER" id="PTHR23086">
    <property type="entry name" value="PHOSPHATIDYLINOSITOL-4-PHOSPHATE 5-KINASE"/>
    <property type="match status" value="1"/>
</dbReference>
<dbReference type="Pfam" id="PF01504">
    <property type="entry name" value="PIP5K"/>
    <property type="match status" value="1"/>
</dbReference>
<dbReference type="SMART" id="SM00330">
    <property type="entry name" value="PIPKc"/>
    <property type="match status" value="1"/>
</dbReference>
<dbReference type="SUPFAM" id="SSF56104">
    <property type="entry name" value="SAICAR synthase-like"/>
    <property type="match status" value="1"/>
</dbReference>
<dbReference type="PROSITE" id="PS51455">
    <property type="entry name" value="PIPK"/>
    <property type="match status" value="1"/>
</dbReference>
<feature type="initiator methionine" description="Removed" evidence="2">
    <location>
        <position position="1"/>
    </location>
</feature>
<feature type="chain" id="PRO_0000185467" description="Phosphatidylinositol 5-phosphate 4-kinase type-2 alpha">
    <location>
        <begin position="2"/>
        <end position="406"/>
    </location>
</feature>
<feature type="domain" description="PIPK" evidence="5">
    <location>
        <begin position="33"/>
        <end position="405"/>
    </location>
</feature>
<feature type="region of interest" description="Required for interaction with PIP5K1A" evidence="3">
    <location>
        <begin position="59"/>
        <end position="65"/>
    </location>
</feature>
<feature type="region of interest" description="Disordered" evidence="6">
    <location>
        <begin position="288"/>
        <end position="329"/>
    </location>
</feature>
<feature type="compositionally biased region" description="Acidic residues" evidence="6">
    <location>
        <begin position="289"/>
        <end position="304"/>
    </location>
</feature>
<feature type="modified residue" description="N-acetylalanine" evidence="2">
    <location>
        <position position="2"/>
    </location>
</feature>
<feature type="modified residue" description="Phosphothreonine" evidence="2">
    <location>
        <position position="3"/>
    </location>
</feature>
<feature type="modified residue" description="Phosphoserine" evidence="2">
    <location>
        <position position="14"/>
    </location>
</feature>
<feature type="modified residue" description="N6-acetyllysine" evidence="2">
    <location>
        <position position="89"/>
    </location>
</feature>
<feature type="modified residue" description="N6-acetyllysine" evidence="2">
    <location>
        <position position="145"/>
    </location>
</feature>
<comment type="function">
    <text evidence="1 2 4">Catalyzes the phosphorylation of phosphatidylinositol 5-phosphate (PtdIns5P) on the fourth hydroxyl of the myo-inositol ring, to form phosphatidylinositol 4,5-bisphosphate (PtdIns(4,5)P2). Has both ATP- and GTP-dependent kinase activities. May exert its function by regulating the levels of PtdIns5P, which functions in the cytosol by increasing AKT activity and in the nucleus signals through ING2 (By similarity). May regulate the pool of cytosolic PtdIns5P in response to the activation of tyrosine phosphorylation (By similarity). May be involved in thrombopoiesis, and the terminal maturation of megakaryocytes and regulation of their size (By similarity). May negatively regulate insulin-stimulated glucose uptake by lowering the levels of PtdIns5P (By similarity).</text>
</comment>
<comment type="catalytic activity">
    <reaction evidence="2">
        <text>a 1,2-diacyl-sn-glycero-3-phospho-(1D-myo-inositol-5-phosphate) + ATP = a 1,2-diacyl-sn-glycero-3-phospho-(1D-myo-inositol-4,5-bisphosphate) + ADP + H(+)</text>
        <dbReference type="Rhea" id="RHEA:12280"/>
        <dbReference type="ChEBI" id="CHEBI:15378"/>
        <dbReference type="ChEBI" id="CHEBI:30616"/>
        <dbReference type="ChEBI" id="CHEBI:57795"/>
        <dbReference type="ChEBI" id="CHEBI:58456"/>
        <dbReference type="ChEBI" id="CHEBI:456216"/>
        <dbReference type="EC" id="2.7.1.149"/>
    </reaction>
    <physiologicalReaction direction="left-to-right" evidence="2">
        <dbReference type="Rhea" id="RHEA:12281"/>
    </physiologicalReaction>
</comment>
<comment type="catalytic activity">
    <reaction evidence="2">
        <text>1,2-dihexadecanoyl-sn-glycero-3-phospho-(1D-myo-inositol-5-phosphate) + ATP = 1,2-dihexadecanoyl-sn-glycero-3-phospho-(1D-myo-inositol-4,5-bisphosphate) + ADP + H(+)</text>
        <dbReference type="Rhea" id="RHEA:55992"/>
        <dbReference type="ChEBI" id="CHEBI:15378"/>
        <dbReference type="ChEBI" id="CHEBI:30616"/>
        <dbReference type="ChEBI" id="CHEBI:83423"/>
        <dbReference type="ChEBI" id="CHEBI:84968"/>
        <dbReference type="ChEBI" id="CHEBI:456216"/>
    </reaction>
    <physiologicalReaction direction="left-to-right" evidence="2">
        <dbReference type="Rhea" id="RHEA:55993"/>
    </physiologicalReaction>
</comment>
<comment type="catalytic activity">
    <reaction evidence="2">
        <text>1,2-dihexadecanoyl-sn-glycero-3-phospho-(1D-myo-inositol-5-phosphate) + GTP = 1,2-dihexadecanoyl-sn-glycero-3-phospho-(1D-myo-inositol-4,5-bisphosphate) + GDP + H(+)</text>
        <dbReference type="Rhea" id="RHEA:55964"/>
        <dbReference type="ChEBI" id="CHEBI:15378"/>
        <dbReference type="ChEBI" id="CHEBI:37565"/>
        <dbReference type="ChEBI" id="CHEBI:58189"/>
        <dbReference type="ChEBI" id="CHEBI:83423"/>
        <dbReference type="ChEBI" id="CHEBI:84968"/>
    </reaction>
    <physiologicalReaction direction="left-to-right" evidence="2">
        <dbReference type="Rhea" id="RHEA:55965"/>
    </physiologicalReaction>
</comment>
<comment type="activity regulation">
    <text evidence="4">In rod outer segments, activated by light.</text>
</comment>
<comment type="subunit">
    <text evidence="2 3">Homodimer. Interacts with PIP4K2B; the interaction may regulate localization to the nucleus (By similarity). Probably interacts with PIP5K1A; the interaction inhibits PIP5K1A kinase activity (By similarity).</text>
</comment>
<comment type="subcellular location">
    <subcellularLocation>
        <location evidence="1">Cell membrane</location>
    </subcellularLocation>
    <subcellularLocation>
        <location evidence="2">Nucleus</location>
    </subcellularLocation>
    <subcellularLocation>
        <location evidence="1">Lysosome</location>
    </subcellularLocation>
    <subcellularLocation>
        <location evidence="2">Cytoplasm</location>
    </subcellularLocation>
    <subcellularLocation>
        <location evidence="1">Photoreceptor inner segment</location>
    </subcellularLocation>
    <subcellularLocation>
        <location evidence="1">Cell projection</location>
        <location evidence="1">Cilium</location>
        <location evidence="1">Photoreceptor outer segment</location>
    </subcellularLocation>
    <text evidence="1 2">May translocate from the cytosol to the cell membrane upon activation of tyrosine phosphorylation. May translocate from the inner to the outer segments of the rod photoreceptor cells in response to light (By similarity). Localization to the nucleus is modulated by the interaction with PIP4K2B (By similarity).</text>
</comment>
<comment type="PTM">
    <text evidence="4">Phosphorylated in tyrosines. Phosphorylation is induced by light and increases kinase activity.</text>
</comment>
<proteinExistence type="evidence at transcript level"/>
<reference key="1">
    <citation type="submission" date="1997-04" db="EMBL/GenBank/DDBJ databases">
        <title>Phosphatidyl-inositol-4-phosphate-5-kinase (PIP-kinase).</title>
        <authorList>
            <person name="Schechinger W."/>
            <person name="Schleicher E.D."/>
        </authorList>
    </citation>
    <scope>NUCLEOTIDE SEQUENCE [MRNA]</scope>
    <source>
        <tissue>Kidney</tissue>
    </source>
</reference>
<gene>
    <name type="primary">PIP4K2A</name>
    <name type="synonym">PIP5K2A</name>
</gene>
<protein>
    <recommendedName>
        <fullName evidence="7">Phosphatidylinositol 5-phosphate 4-kinase type-2 alpha</fullName>
        <ecNumber evidence="2">2.7.1.149</ecNumber>
    </recommendedName>
    <alternativeName>
        <fullName>1-phosphatidylinositol 5-phosphate 4-kinase 2-alpha</fullName>
    </alternativeName>
    <alternativeName>
        <fullName>Diphosphoinositide kinase 2-alpha</fullName>
    </alternativeName>
    <alternativeName>
        <fullName>Phosphatidylinositol 5-phosphate 4-kinase type II alpha</fullName>
        <shortName>PI(5)P 4-kinase type II alpha</shortName>
        <shortName>PIP4KII-alpha</shortName>
    </alternativeName>
    <alternativeName>
        <fullName>PtdIns(5)P-4-kinase isoform 2-alpha</fullName>
    </alternativeName>
</protein>
<name>PI42A_PIG</name>
<evidence type="ECO:0000250" key="1">
    <source>
        <dbReference type="UniProtKB" id="O70172"/>
    </source>
</evidence>
<evidence type="ECO:0000250" key="2">
    <source>
        <dbReference type="UniProtKB" id="P48426"/>
    </source>
</evidence>
<evidence type="ECO:0000250" key="3">
    <source>
        <dbReference type="UniProtKB" id="Q8TBX8"/>
    </source>
</evidence>
<evidence type="ECO:0000250" key="4">
    <source>
        <dbReference type="UniProtKB" id="Q9R0I8"/>
    </source>
</evidence>
<evidence type="ECO:0000255" key="5">
    <source>
        <dbReference type="PROSITE-ProRule" id="PRU00781"/>
    </source>
</evidence>
<evidence type="ECO:0000256" key="6">
    <source>
        <dbReference type="SAM" id="MobiDB-lite"/>
    </source>
</evidence>
<evidence type="ECO:0000305" key="7"/>
<accession>O13010</accession>
<sequence length="406" mass="46189">MATPGNLGSSVLASKTKTKKKHFVAQKVKLFRASDPLLSVLMWGVNHSINELSHVQIPVMLMPDDFKAYSKIKVDNHLFNKENMPSHFKFKEYCPMVFRNLRERFGIDDQDFQNSLTRSAPLPNDSXARSGARFHTSYDRRYVIKTITSEDVAEMHNILKNYHQHIVECHGITLLPQFLGMYRLNVDGVEIYVIVTRNVFSHRLSVYRKYDLKGSTVAREASDKEKAKELPTLKDNDFINEGQKIYIDDNXKKVFLEKLKKDVEFLAQLKLMDYSLLVGIHDVERAEQEEVECEENDGEEEGESDGTHPVGTPPDSPGNTLNSSPPLAPGEFDPNIDVYGIKCHENSPRKEVYFMAIIDILTHYDAKKKAAHAAKXVKHGAGAEISTVNPEQYSKRFLDFIGHILT</sequence>
<keyword id="KW-0007">Acetylation</keyword>
<keyword id="KW-0067">ATP-binding</keyword>
<keyword id="KW-1003">Cell membrane</keyword>
<keyword id="KW-0966">Cell projection</keyword>
<keyword id="KW-0963">Cytoplasm</keyword>
<keyword id="KW-0418">Kinase</keyword>
<keyword id="KW-0443">Lipid metabolism</keyword>
<keyword id="KW-0458">Lysosome</keyword>
<keyword id="KW-0472">Membrane</keyword>
<keyword id="KW-0547">Nucleotide-binding</keyword>
<keyword id="KW-0539">Nucleus</keyword>
<keyword id="KW-0597">Phosphoprotein</keyword>
<keyword id="KW-1185">Reference proteome</keyword>
<keyword id="KW-0808">Transferase</keyword>
<organism>
    <name type="scientific">Sus scrofa</name>
    <name type="common">Pig</name>
    <dbReference type="NCBI Taxonomy" id="9823"/>
    <lineage>
        <taxon>Eukaryota</taxon>
        <taxon>Metazoa</taxon>
        <taxon>Chordata</taxon>
        <taxon>Craniata</taxon>
        <taxon>Vertebrata</taxon>
        <taxon>Euteleostomi</taxon>
        <taxon>Mammalia</taxon>
        <taxon>Eutheria</taxon>
        <taxon>Laurasiatheria</taxon>
        <taxon>Artiodactyla</taxon>
        <taxon>Suina</taxon>
        <taxon>Suidae</taxon>
        <taxon>Sus</taxon>
    </lineage>
</organism>